<comment type="function">
    <text evidence="1">NAD-binding protein involved in the addition of a carboxymethylaminomethyl (cmnm) group at the wobble position (U34) of certain tRNAs, forming tRNA-cmnm(5)s(2)U34.</text>
</comment>
<comment type="cofactor">
    <cofactor evidence="1">
        <name>FAD</name>
        <dbReference type="ChEBI" id="CHEBI:57692"/>
    </cofactor>
</comment>
<comment type="subunit">
    <text evidence="1">Homodimer. Heterotetramer of two MnmE and two MnmG subunits.</text>
</comment>
<comment type="subcellular location">
    <subcellularLocation>
        <location evidence="1">Cytoplasm</location>
    </subcellularLocation>
</comment>
<comment type="similarity">
    <text evidence="1">Belongs to the MnmG family.</text>
</comment>
<proteinExistence type="inferred from homology"/>
<feature type="chain" id="PRO_1000076311" description="tRNA uridine 5-carboxymethylaminomethyl modification enzyme MnmG">
    <location>
        <begin position="1"/>
        <end position="618"/>
    </location>
</feature>
<feature type="binding site" evidence="1">
    <location>
        <begin position="11"/>
        <end position="16"/>
    </location>
    <ligand>
        <name>FAD</name>
        <dbReference type="ChEBI" id="CHEBI:57692"/>
    </ligand>
</feature>
<feature type="binding site" evidence="1">
    <location>
        <position position="123"/>
    </location>
    <ligand>
        <name>FAD</name>
        <dbReference type="ChEBI" id="CHEBI:57692"/>
    </ligand>
</feature>
<feature type="binding site" evidence="1">
    <location>
        <position position="178"/>
    </location>
    <ligand>
        <name>FAD</name>
        <dbReference type="ChEBI" id="CHEBI:57692"/>
    </ligand>
</feature>
<feature type="binding site" evidence="1">
    <location>
        <begin position="270"/>
        <end position="284"/>
    </location>
    <ligand>
        <name>NAD(+)</name>
        <dbReference type="ChEBI" id="CHEBI:57540"/>
    </ligand>
</feature>
<feature type="binding site" evidence="1">
    <location>
        <position position="367"/>
    </location>
    <ligand>
        <name>FAD</name>
        <dbReference type="ChEBI" id="CHEBI:57692"/>
    </ligand>
</feature>
<protein>
    <recommendedName>
        <fullName evidence="1">tRNA uridine 5-carboxymethylaminomethyl modification enzyme MnmG</fullName>
    </recommendedName>
    <alternativeName>
        <fullName evidence="1">Glucose-inhibited division protein A</fullName>
    </alternativeName>
</protein>
<keyword id="KW-0963">Cytoplasm</keyword>
<keyword id="KW-0274">FAD</keyword>
<keyword id="KW-0285">Flavoprotein</keyword>
<keyword id="KW-0520">NAD</keyword>
<keyword id="KW-0819">tRNA processing</keyword>
<organism>
    <name type="scientific">Caulobacter sp. (strain K31)</name>
    <dbReference type="NCBI Taxonomy" id="366602"/>
    <lineage>
        <taxon>Bacteria</taxon>
        <taxon>Pseudomonadati</taxon>
        <taxon>Pseudomonadota</taxon>
        <taxon>Alphaproteobacteria</taxon>
        <taxon>Caulobacterales</taxon>
        <taxon>Caulobacteraceae</taxon>
        <taxon>Caulobacter</taxon>
    </lineage>
</organism>
<evidence type="ECO:0000255" key="1">
    <source>
        <dbReference type="HAMAP-Rule" id="MF_00129"/>
    </source>
</evidence>
<name>MNMG_CAUSK</name>
<dbReference type="EMBL" id="CP000927">
    <property type="protein sequence ID" value="ABZ74144.1"/>
    <property type="molecule type" value="Genomic_DNA"/>
</dbReference>
<dbReference type="SMR" id="B0T6E1"/>
<dbReference type="STRING" id="366602.Caul_5024"/>
<dbReference type="KEGG" id="cak:Caul_5024"/>
<dbReference type="eggNOG" id="COG0445">
    <property type="taxonomic scope" value="Bacteria"/>
</dbReference>
<dbReference type="HOGENOM" id="CLU_007831_2_2_5"/>
<dbReference type="GO" id="GO:0005829">
    <property type="term" value="C:cytosol"/>
    <property type="evidence" value="ECO:0007669"/>
    <property type="project" value="TreeGrafter"/>
</dbReference>
<dbReference type="GO" id="GO:0050660">
    <property type="term" value="F:flavin adenine dinucleotide binding"/>
    <property type="evidence" value="ECO:0007669"/>
    <property type="project" value="UniProtKB-UniRule"/>
</dbReference>
<dbReference type="GO" id="GO:0030488">
    <property type="term" value="P:tRNA methylation"/>
    <property type="evidence" value="ECO:0007669"/>
    <property type="project" value="TreeGrafter"/>
</dbReference>
<dbReference type="GO" id="GO:0002098">
    <property type="term" value="P:tRNA wobble uridine modification"/>
    <property type="evidence" value="ECO:0007669"/>
    <property type="project" value="InterPro"/>
</dbReference>
<dbReference type="FunFam" id="3.50.50.60:FF:000082">
    <property type="entry name" value="protein MTO1 homolog, mitochondrial isoform X1"/>
    <property type="match status" value="1"/>
</dbReference>
<dbReference type="FunFam" id="1.10.150.570:FF:000001">
    <property type="entry name" value="tRNA uridine 5-carboxymethylaminomethyl modification enzyme MnmG"/>
    <property type="match status" value="1"/>
</dbReference>
<dbReference type="FunFam" id="3.50.50.60:FF:000002">
    <property type="entry name" value="tRNA uridine 5-carboxymethylaminomethyl modification enzyme MnmG"/>
    <property type="match status" value="1"/>
</dbReference>
<dbReference type="Gene3D" id="3.50.50.60">
    <property type="entry name" value="FAD/NAD(P)-binding domain"/>
    <property type="match status" value="2"/>
</dbReference>
<dbReference type="Gene3D" id="1.10.150.570">
    <property type="entry name" value="GidA associated domain, C-terminal subdomain"/>
    <property type="match status" value="1"/>
</dbReference>
<dbReference type="Gene3D" id="1.10.10.1800">
    <property type="entry name" value="tRNA uridine 5-carboxymethylaminomethyl modification enzyme MnmG/GidA"/>
    <property type="match status" value="1"/>
</dbReference>
<dbReference type="HAMAP" id="MF_00129">
    <property type="entry name" value="MnmG_GidA"/>
    <property type="match status" value="1"/>
</dbReference>
<dbReference type="InterPro" id="IPR036188">
    <property type="entry name" value="FAD/NAD-bd_sf"/>
</dbReference>
<dbReference type="InterPro" id="IPR049312">
    <property type="entry name" value="GIDA_C_N"/>
</dbReference>
<dbReference type="InterPro" id="IPR004416">
    <property type="entry name" value="MnmG"/>
</dbReference>
<dbReference type="InterPro" id="IPR002218">
    <property type="entry name" value="MnmG-rel"/>
</dbReference>
<dbReference type="InterPro" id="IPR020595">
    <property type="entry name" value="MnmG-rel_CS"/>
</dbReference>
<dbReference type="InterPro" id="IPR026904">
    <property type="entry name" value="MnmG_C"/>
</dbReference>
<dbReference type="InterPro" id="IPR047001">
    <property type="entry name" value="MnmG_C_subdom"/>
</dbReference>
<dbReference type="InterPro" id="IPR044920">
    <property type="entry name" value="MnmG_C_subdom_sf"/>
</dbReference>
<dbReference type="InterPro" id="IPR040131">
    <property type="entry name" value="MnmG_N"/>
</dbReference>
<dbReference type="NCBIfam" id="TIGR00136">
    <property type="entry name" value="mnmG_gidA"/>
    <property type="match status" value="1"/>
</dbReference>
<dbReference type="PANTHER" id="PTHR11806">
    <property type="entry name" value="GLUCOSE INHIBITED DIVISION PROTEIN A"/>
    <property type="match status" value="1"/>
</dbReference>
<dbReference type="PANTHER" id="PTHR11806:SF0">
    <property type="entry name" value="PROTEIN MTO1 HOMOLOG, MITOCHONDRIAL"/>
    <property type="match status" value="1"/>
</dbReference>
<dbReference type="Pfam" id="PF01134">
    <property type="entry name" value="GIDA"/>
    <property type="match status" value="1"/>
</dbReference>
<dbReference type="Pfam" id="PF21680">
    <property type="entry name" value="GIDA_C_1st"/>
    <property type="match status" value="1"/>
</dbReference>
<dbReference type="Pfam" id="PF13932">
    <property type="entry name" value="SAM_GIDA_C"/>
    <property type="match status" value="1"/>
</dbReference>
<dbReference type="SMART" id="SM01228">
    <property type="entry name" value="GIDA_assoc_3"/>
    <property type="match status" value="1"/>
</dbReference>
<dbReference type="SUPFAM" id="SSF51905">
    <property type="entry name" value="FAD/NAD(P)-binding domain"/>
    <property type="match status" value="1"/>
</dbReference>
<dbReference type="PROSITE" id="PS01280">
    <property type="entry name" value="GIDA_1"/>
    <property type="match status" value="1"/>
</dbReference>
<dbReference type="PROSITE" id="PS01281">
    <property type="entry name" value="GIDA_2"/>
    <property type="match status" value="1"/>
</dbReference>
<gene>
    <name evidence="1" type="primary">mnmG</name>
    <name evidence="1" type="synonym">gidA</name>
    <name type="ordered locus">Caul_5024</name>
</gene>
<reference key="1">
    <citation type="submission" date="2008-01" db="EMBL/GenBank/DDBJ databases">
        <title>Complete sequence of chromosome of Caulobacter sp. K31.</title>
        <authorList>
            <consortium name="US DOE Joint Genome Institute"/>
            <person name="Copeland A."/>
            <person name="Lucas S."/>
            <person name="Lapidus A."/>
            <person name="Barry K."/>
            <person name="Glavina del Rio T."/>
            <person name="Dalin E."/>
            <person name="Tice H."/>
            <person name="Pitluck S."/>
            <person name="Bruce D."/>
            <person name="Goodwin L."/>
            <person name="Thompson L.S."/>
            <person name="Brettin T."/>
            <person name="Detter J.C."/>
            <person name="Han C."/>
            <person name="Schmutz J."/>
            <person name="Larimer F."/>
            <person name="Land M."/>
            <person name="Hauser L."/>
            <person name="Kyrpides N."/>
            <person name="Kim E."/>
            <person name="Stephens C."/>
            <person name="Richardson P."/>
        </authorList>
    </citation>
    <scope>NUCLEOTIDE SEQUENCE [LARGE SCALE GENOMIC DNA]</scope>
    <source>
        <strain>K31</strain>
    </source>
</reference>
<accession>B0T6E1</accession>
<sequence>MSNTWDVIVIGGGHAGCEAASASARAGARTLLLTHKRETVGEMSCNPAIGGLGKGHLVREIDALDGLMGRIGDKAGIQYRLLNRSKGPAVRGPRSQIDRKLYREAMQAELFSHVNLDVVAIAVEDLIVEDGVVAGAIDGEGAIYRAPRVVLTTGTFLKGVIHQGEIRISAGRVGDAPSIGLADRLYALGFDMGRLKTGTPARLDGKTIAWDRLEMQAADEQPEPFSFLTTRIDVPQIQCGITYTTAETHKIIAERLGESAVYGGRATGIGPRYCPSIEDKVVRFADKTSHQVFLEPEGLDDDTVYPNGVSTSVSAETQLLFLRTMPGLENVEVIRYGYAIEYDYVDPRELYPTLETKRLPGLYLAGQINGTTGYEEAGAQGLMAGLNAALAVQGREPAVFARDEAYIGVMIDDLVTRGVTEPYRMFTSRAEFRLILRADNADQRLTDRGLALGCVGSVRAEAWAAKKAELEAVRAFARSVTLTPAEANRTGFKVNHDGQRRDVLAMLALPEVTLDRLATVWPQISTWSPMAREQIAIEAAYAGYLDRQRDDVEAFRREEDLRLPADLDYGLVGSLSNEVREKLARVKPLTLGQAARIEGVTPGALTALLAHVRRAKAA</sequence>